<comment type="function">
    <text evidence="1">Part of the ABC transporter complex LolCDE involved in the translocation of mature outer membrane-directed lipoproteins, from the inner membrane to the periplasmic chaperone, LolA. Responsible for the formation of the LolA-lipoprotein complex in an ATP-dependent manner.</text>
</comment>
<comment type="subunit">
    <text evidence="1">The complex is composed of two ATP-binding proteins (LolD) and two transmembrane proteins (LolC and LolE).</text>
</comment>
<comment type="subcellular location">
    <subcellularLocation>
        <location evidence="1">Cell inner membrane</location>
        <topology evidence="1">Peripheral membrane protein</topology>
    </subcellularLocation>
</comment>
<comment type="similarity">
    <text evidence="1">Belongs to the ABC transporter superfamily. Lipoprotein translocase (TC 3.A.1.125) family.</text>
</comment>
<comment type="sequence caution" evidence="2">
    <conflict type="erroneous initiation">
        <sequence resource="EMBL-CDS" id="AAL52319"/>
    </conflict>
</comment>
<evidence type="ECO:0000255" key="1">
    <source>
        <dbReference type="HAMAP-Rule" id="MF_01708"/>
    </source>
</evidence>
<evidence type="ECO:0000305" key="2"/>
<sequence>MAAEIILRLERIGRAYKEADRELIILNDADFTLRRGEMVALVAPSGAGKSTLLHTAGLLERPDSGDVVLDGRSCSKLSDDERTAVRRNDVGFVYQFHHLLPEFSALENVMLPQMIRGLSRKAAAERAQQLLEYMKIGKRASHRPAELSGGEQQRVAIARAVANAPLVLLADEPTGNLDPTTSSYVFGALEALVRQSGLAALIATHNHELARRMDRRVTLKDGRVVDL</sequence>
<name>LOLD_BRUME</name>
<gene>
    <name evidence="1" type="primary">lolD</name>
    <name type="ordered locus">BMEI1138</name>
</gene>
<keyword id="KW-0067">ATP-binding</keyword>
<keyword id="KW-0997">Cell inner membrane</keyword>
<keyword id="KW-1003">Cell membrane</keyword>
<keyword id="KW-0472">Membrane</keyword>
<keyword id="KW-0547">Nucleotide-binding</keyword>
<keyword id="KW-1278">Translocase</keyword>
<keyword id="KW-0813">Transport</keyword>
<reference key="1">
    <citation type="journal article" date="2002" name="Proc. Natl. Acad. Sci. U.S.A.">
        <title>The genome sequence of the facultative intracellular pathogen Brucella melitensis.</title>
        <authorList>
            <person name="DelVecchio V.G."/>
            <person name="Kapatral V."/>
            <person name="Redkar R.J."/>
            <person name="Patra G."/>
            <person name="Mujer C."/>
            <person name="Los T."/>
            <person name="Ivanova N."/>
            <person name="Anderson I."/>
            <person name="Bhattacharyya A."/>
            <person name="Lykidis A."/>
            <person name="Reznik G."/>
            <person name="Jablonski L."/>
            <person name="Larsen N."/>
            <person name="D'Souza M."/>
            <person name="Bernal A."/>
            <person name="Mazur M."/>
            <person name="Goltsman E."/>
            <person name="Selkov E."/>
            <person name="Elzer P.H."/>
            <person name="Hagius S."/>
            <person name="O'Callaghan D."/>
            <person name="Letesson J.-J."/>
            <person name="Haselkorn R."/>
            <person name="Kyrpides N.C."/>
            <person name="Overbeek R."/>
        </authorList>
    </citation>
    <scope>NUCLEOTIDE SEQUENCE [LARGE SCALE GENOMIC DNA]</scope>
    <source>
        <strain>ATCC 23456 / CCUG 17765 / NCTC 10094 / 16M</strain>
    </source>
</reference>
<dbReference type="EC" id="7.6.2.-" evidence="1"/>
<dbReference type="EMBL" id="AE008917">
    <property type="protein sequence ID" value="AAL52319.1"/>
    <property type="status" value="ALT_INIT"/>
    <property type="molecule type" value="Genomic_DNA"/>
</dbReference>
<dbReference type="PIR" id="AD3394">
    <property type="entry name" value="AD3394"/>
</dbReference>
<dbReference type="RefSeq" id="WP_002963957.1">
    <property type="nucleotide sequence ID" value="NZ_GG703778.1"/>
</dbReference>
<dbReference type="SMR" id="Q8YGM0"/>
<dbReference type="KEGG" id="bme:BMEI1138"/>
<dbReference type="KEGG" id="bmel:DK63_275"/>
<dbReference type="PATRIC" id="fig|224914.52.peg.284"/>
<dbReference type="eggNOG" id="COG1136">
    <property type="taxonomic scope" value="Bacteria"/>
</dbReference>
<dbReference type="PhylomeDB" id="Q8YGM0"/>
<dbReference type="Proteomes" id="UP000000419">
    <property type="component" value="Chromosome I"/>
</dbReference>
<dbReference type="GO" id="GO:0005886">
    <property type="term" value="C:plasma membrane"/>
    <property type="evidence" value="ECO:0007669"/>
    <property type="project" value="UniProtKB-SubCell"/>
</dbReference>
<dbReference type="GO" id="GO:0005524">
    <property type="term" value="F:ATP binding"/>
    <property type="evidence" value="ECO:0007669"/>
    <property type="project" value="UniProtKB-KW"/>
</dbReference>
<dbReference type="GO" id="GO:0016887">
    <property type="term" value="F:ATP hydrolysis activity"/>
    <property type="evidence" value="ECO:0007669"/>
    <property type="project" value="InterPro"/>
</dbReference>
<dbReference type="GO" id="GO:0022857">
    <property type="term" value="F:transmembrane transporter activity"/>
    <property type="evidence" value="ECO:0007669"/>
    <property type="project" value="TreeGrafter"/>
</dbReference>
<dbReference type="GO" id="GO:0044874">
    <property type="term" value="P:lipoprotein localization to outer membrane"/>
    <property type="evidence" value="ECO:0007669"/>
    <property type="project" value="TreeGrafter"/>
</dbReference>
<dbReference type="GO" id="GO:0089705">
    <property type="term" value="P:protein localization to outer membrane"/>
    <property type="evidence" value="ECO:0007669"/>
    <property type="project" value="TreeGrafter"/>
</dbReference>
<dbReference type="CDD" id="cd03255">
    <property type="entry name" value="ABC_MJ0796_LolCDE_FtsE"/>
    <property type="match status" value="1"/>
</dbReference>
<dbReference type="FunFam" id="3.40.50.300:FF:000032">
    <property type="entry name" value="Export ABC transporter ATP-binding protein"/>
    <property type="match status" value="1"/>
</dbReference>
<dbReference type="Gene3D" id="3.40.50.300">
    <property type="entry name" value="P-loop containing nucleotide triphosphate hydrolases"/>
    <property type="match status" value="1"/>
</dbReference>
<dbReference type="InterPro" id="IPR003593">
    <property type="entry name" value="AAA+_ATPase"/>
</dbReference>
<dbReference type="InterPro" id="IPR003439">
    <property type="entry name" value="ABC_transporter-like_ATP-bd"/>
</dbReference>
<dbReference type="InterPro" id="IPR017871">
    <property type="entry name" value="ABC_transporter-like_CS"/>
</dbReference>
<dbReference type="InterPro" id="IPR015854">
    <property type="entry name" value="ABC_transpr_LolD-like"/>
</dbReference>
<dbReference type="InterPro" id="IPR017911">
    <property type="entry name" value="MacB-like_ATP-bd"/>
</dbReference>
<dbReference type="InterPro" id="IPR027417">
    <property type="entry name" value="P-loop_NTPase"/>
</dbReference>
<dbReference type="PANTHER" id="PTHR24220">
    <property type="entry name" value="IMPORT ATP-BINDING PROTEIN"/>
    <property type="match status" value="1"/>
</dbReference>
<dbReference type="PANTHER" id="PTHR24220:SF689">
    <property type="entry name" value="LIPOPROTEIN-RELEASING SYSTEM ATP-BINDING PROTEIN LOLD"/>
    <property type="match status" value="1"/>
</dbReference>
<dbReference type="Pfam" id="PF00005">
    <property type="entry name" value="ABC_tran"/>
    <property type="match status" value="1"/>
</dbReference>
<dbReference type="SMART" id="SM00382">
    <property type="entry name" value="AAA"/>
    <property type="match status" value="1"/>
</dbReference>
<dbReference type="SUPFAM" id="SSF52540">
    <property type="entry name" value="P-loop containing nucleoside triphosphate hydrolases"/>
    <property type="match status" value="1"/>
</dbReference>
<dbReference type="PROSITE" id="PS00211">
    <property type="entry name" value="ABC_TRANSPORTER_1"/>
    <property type="match status" value="1"/>
</dbReference>
<dbReference type="PROSITE" id="PS50893">
    <property type="entry name" value="ABC_TRANSPORTER_2"/>
    <property type="match status" value="1"/>
</dbReference>
<dbReference type="PROSITE" id="PS51244">
    <property type="entry name" value="LOLD"/>
    <property type="match status" value="1"/>
</dbReference>
<accession>Q8YGM0</accession>
<proteinExistence type="inferred from homology"/>
<feature type="chain" id="PRO_0000092423" description="Lipoprotein-releasing system ATP-binding protein LolD">
    <location>
        <begin position="1"/>
        <end position="227"/>
    </location>
</feature>
<feature type="domain" description="ABC transporter" evidence="1">
    <location>
        <begin position="7"/>
        <end position="227"/>
    </location>
</feature>
<feature type="binding site" evidence="1">
    <location>
        <begin position="43"/>
        <end position="50"/>
    </location>
    <ligand>
        <name>ATP</name>
        <dbReference type="ChEBI" id="CHEBI:30616"/>
    </ligand>
</feature>
<organism>
    <name type="scientific">Brucella melitensis biotype 1 (strain ATCC 23456 / CCUG 17765 / NCTC 10094 / 16M)</name>
    <dbReference type="NCBI Taxonomy" id="224914"/>
    <lineage>
        <taxon>Bacteria</taxon>
        <taxon>Pseudomonadati</taxon>
        <taxon>Pseudomonadota</taxon>
        <taxon>Alphaproteobacteria</taxon>
        <taxon>Hyphomicrobiales</taxon>
        <taxon>Brucellaceae</taxon>
        <taxon>Brucella/Ochrobactrum group</taxon>
        <taxon>Brucella</taxon>
    </lineage>
</organism>
<protein>
    <recommendedName>
        <fullName evidence="1">Lipoprotein-releasing system ATP-binding protein LolD</fullName>
        <ecNumber evidence="1">7.6.2.-</ecNumber>
    </recommendedName>
</protein>